<sequence>MKSATPDDLPRTGVEPDLSRSASECFESLWNGAIGMRSLPLTIAGARVLDAGVTCSGSLEAGLGLARLCLGDLANVRYVPATADDLVGLSVTIQTDHPVLSCLGGQYAGWPVSVADYFAMASGPMRCLRGKEAMLEQLHLSRQATDDDFAVGVLESDTLPGEDVIEAMADECGVDPSRLCLAVAPSTSIAGSAQVVSRSVETALHKLHALEFDVTRVVSAHGDAPLPPPAKKGDTIGGIGRTNDAMLYGARVTLWVDAEDDAIDSVASKVPSQSSDDHGRPFAEIFKQYEYDFYQVDPMLFSPAVVTIHSLQSGRTWRHGQISIDVMRKSFGL</sequence>
<protein>
    <recommendedName>
        <fullName>Methenyltetrahydromethanopterin cyclohydrolase</fullName>
        <ecNumber>3.5.4.27</ecNumber>
    </recommendedName>
    <alternativeName>
        <fullName>Methenyl-H4MPT cyclohydrolase</fullName>
    </alternativeName>
</protein>
<dbReference type="EC" id="3.5.4.27"/>
<dbReference type="EMBL" id="BX294144">
    <property type="protein sequence ID" value="CAD74990.1"/>
    <property type="molecule type" value="Genomic_DNA"/>
</dbReference>
<dbReference type="RefSeq" id="NP_867444.1">
    <property type="nucleotide sequence ID" value="NC_005027.1"/>
</dbReference>
<dbReference type="RefSeq" id="WP_011121084.1">
    <property type="nucleotide sequence ID" value="NC_005027.1"/>
</dbReference>
<dbReference type="SMR" id="Q7UPS1"/>
<dbReference type="STRING" id="243090.RB6759"/>
<dbReference type="EnsemblBacteria" id="CAD74990">
    <property type="protein sequence ID" value="CAD74990"/>
    <property type="gene ID" value="RB6759"/>
</dbReference>
<dbReference type="KEGG" id="rba:RB6759"/>
<dbReference type="PATRIC" id="fig|243090.15.peg.3279"/>
<dbReference type="eggNOG" id="COG3252">
    <property type="taxonomic scope" value="Bacteria"/>
</dbReference>
<dbReference type="HOGENOM" id="CLU_876031_0_0_0"/>
<dbReference type="InParanoid" id="Q7UPS1"/>
<dbReference type="OrthoDB" id="241529at2"/>
<dbReference type="UniPathway" id="UPA00562">
    <property type="reaction ID" value="UER00703"/>
</dbReference>
<dbReference type="Proteomes" id="UP000001025">
    <property type="component" value="Chromosome"/>
</dbReference>
<dbReference type="GO" id="GO:0005737">
    <property type="term" value="C:cytoplasm"/>
    <property type="evidence" value="ECO:0007669"/>
    <property type="project" value="UniProtKB-SubCell"/>
</dbReference>
<dbReference type="GO" id="GO:0018759">
    <property type="term" value="F:methenyltetrahydromethanopterin cyclohydrolase activity"/>
    <property type="evidence" value="ECO:0007669"/>
    <property type="project" value="UniProtKB-UniRule"/>
</dbReference>
<dbReference type="GO" id="GO:0046294">
    <property type="term" value="P:formaldehyde catabolic process"/>
    <property type="evidence" value="ECO:0007669"/>
    <property type="project" value="UniProtKB-UniRule"/>
</dbReference>
<dbReference type="GO" id="GO:0006730">
    <property type="term" value="P:one-carbon metabolic process"/>
    <property type="evidence" value="ECO:0007669"/>
    <property type="project" value="UniProtKB-UniRule"/>
</dbReference>
<dbReference type="Gene3D" id="3.10.340.11">
    <property type="entry name" value="Methenyltetrahydromethanopterin Cyclohydrolase, Chain A, domain 1"/>
    <property type="match status" value="1"/>
</dbReference>
<dbReference type="Gene3D" id="3.30.1030.10">
    <property type="entry name" value="Methenyltetrahydromethanopterin Cyclohydrolase, Chain A, domain 2"/>
    <property type="match status" value="1"/>
</dbReference>
<dbReference type="HAMAP" id="MF_00486">
    <property type="entry name" value="McH"/>
    <property type="match status" value="1"/>
</dbReference>
<dbReference type="InterPro" id="IPR003209">
    <property type="entry name" value="METHMP_CycHdrlase"/>
</dbReference>
<dbReference type="NCBIfam" id="TIGR03120">
    <property type="entry name" value="one_C_mch"/>
    <property type="match status" value="1"/>
</dbReference>
<dbReference type="Pfam" id="PF02289">
    <property type="entry name" value="MCH"/>
    <property type="match status" value="1"/>
</dbReference>
<dbReference type="SUPFAM" id="SSF56199">
    <property type="entry name" value="Methenyltetrahydromethanopterin cyclohydrolase"/>
    <property type="match status" value="1"/>
</dbReference>
<evidence type="ECO:0000250" key="1"/>
<evidence type="ECO:0000305" key="2"/>
<organism>
    <name type="scientific">Rhodopirellula baltica (strain DSM 10527 / NCIMB 13988 / SH1)</name>
    <dbReference type="NCBI Taxonomy" id="243090"/>
    <lineage>
        <taxon>Bacteria</taxon>
        <taxon>Pseudomonadati</taxon>
        <taxon>Planctomycetota</taxon>
        <taxon>Planctomycetia</taxon>
        <taxon>Pirellulales</taxon>
        <taxon>Pirellulaceae</taxon>
        <taxon>Rhodopirellula</taxon>
    </lineage>
</organism>
<proteinExistence type="inferred from homology"/>
<feature type="chain" id="PRO_0000140897" description="Methenyltetrahydromethanopterin cyclohydrolase">
    <location>
        <begin position="1"/>
        <end position="333"/>
    </location>
</feature>
<reference key="1">
    <citation type="journal article" date="2003" name="Proc. Natl. Acad. Sci. U.S.A.">
        <title>Complete genome sequence of the marine planctomycete Pirellula sp. strain 1.</title>
        <authorList>
            <person name="Gloeckner F.O."/>
            <person name="Kube M."/>
            <person name="Bauer M."/>
            <person name="Teeling H."/>
            <person name="Lombardot T."/>
            <person name="Ludwig W."/>
            <person name="Gade D."/>
            <person name="Beck A."/>
            <person name="Borzym K."/>
            <person name="Heitmann K."/>
            <person name="Rabus R."/>
            <person name="Schlesner H."/>
            <person name="Amann R."/>
            <person name="Reinhardt R."/>
        </authorList>
    </citation>
    <scope>NUCLEOTIDE SEQUENCE [LARGE SCALE GENOMIC DNA]</scope>
    <source>
        <strain>DSM 10527 / NCIMB 13988 / SH1</strain>
    </source>
</reference>
<accession>Q7UPS1</accession>
<comment type="function">
    <text evidence="1">Catalyzes the hydrolysis of methenyl-H(4)MPT(+) to 5-formyl-H(4)MPT.</text>
</comment>
<comment type="catalytic activity">
    <reaction>
        <text>5,10-methenyl-5,6,7,8-tetrahydromethanopterin + H2O = N(5)-formyl-5,6,7,8-tetrahydromethanopterin + H(+)</text>
        <dbReference type="Rhea" id="RHEA:19053"/>
        <dbReference type="ChEBI" id="CHEBI:15377"/>
        <dbReference type="ChEBI" id="CHEBI:15378"/>
        <dbReference type="ChEBI" id="CHEBI:58018"/>
        <dbReference type="ChEBI" id="CHEBI:58337"/>
        <dbReference type="EC" id="3.5.4.27"/>
    </reaction>
</comment>
<comment type="pathway">
    <text>One-carbon metabolism; formaldehyde degradation; formate from formaldehyde (H(4)MPT route): step 3/5.</text>
</comment>
<comment type="subcellular location">
    <subcellularLocation>
        <location evidence="1">Cytoplasm</location>
    </subcellularLocation>
</comment>
<comment type="similarity">
    <text evidence="2">Belongs to the MCH family.</text>
</comment>
<gene>
    <name type="primary">mch</name>
    <name type="ordered locus">RB6759</name>
</gene>
<name>MCH_RHOBA</name>
<keyword id="KW-0963">Cytoplasm</keyword>
<keyword id="KW-0378">Hydrolase</keyword>
<keyword id="KW-0554">One-carbon metabolism</keyword>
<keyword id="KW-1185">Reference proteome</keyword>